<accession>Q8H7S7</accession>
<accession>A0A0P0VV29</accession>
<name>ORR21_ORYSJ</name>
<reference key="1">
    <citation type="journal article" date="2006" name="Gene">
        <title>Identification and characterization of cytokinin-signalling gene families in rice.</title>
        <authorList>
            <person name="Ito Y."/>
            <person name="Kurata N."/>
        </authorList>
    </citation>
    <scope>NUCLEOTIDE SEQUENCE [GENOMIC DNA / MRNA]</scope>
    <source>
        <strain>cv. Nipponbare</strain>
    </source>
</reference>
<reference key="2">
    <citation type="journal article" date="2005" name="Genome Res.">
        <title>Sequence, annotation, and analysis of synteny between rice chromosome 3 and diverged grass species.</title>
        <authorList>
            <consortium name="The rice chromosome 3 sequencing consortium"/>
            <person name="Buell C.R."/>
            <person name="Yuan Q."/>
            <person name="Ouyang S."/>
            <person name="Liu J."/>
            <person name="Zhu W."/>
            <person name="Wang A."/>
            <person name="Maiti R."/>
            <person name="Haas B."/>
            <person name="Wortman J."/>
            <person name="Pertea M."/>
            <person name="Jones K.M."/>
            <person name="Kim M."/>
            <person name="Overton L."/>
            <person name="Tsitrin T."/>
            <person name="Fadrosh D."/>
            <person name="Bera J."/>
            <person name="Weaver B."/>
            <person name="Jin S."/>
            <person name="Johri S."/>
            <person name="Reardon M."/>
            <person name="Webb K."/>
            <person name="Hill J."/>
            <person name="Moffat K."/>
            <person name="Tallon L."/>
            <person name="Van Aken S."/>
            <person name="Lewis M."/>
            <person name="Utterback T."/>
            <person name="Feldblyum T."/>
            <person name="Zismann V."/>
            <person name="Iobst S."/>
            <person name="Hsiao J."/>
            <person name="de Vazeille A.R."/>
            <person name="Salzberg S.L."/>
            <person name="White O."/>
            <person name="Fraser C.M."/>
            <person name="Yu Y."/>
            <person name="Kim H."/>
            <person name="Rambo T."/>
            <person name="Currie J."/>
            <person name="Collura K."/>
            <person name="Kernodle-Thompson S."/>
            <person name="Wei F."/>
            <person name="Kudrna K."/>
            <person name="Ammiraju J.S.S."/>
            <person name="Luo M."/>
            <person name="Goicoechea J.L."/>
            <person name="Wing R.A."/>
            <person name="Henry D."/>
            <person name="Oates R."/>
            <person name="Palmer M."/>
            <person name="Pries G."/>
            <person name="Saski C."/>
            <person name="Simmons J."/>
            <person name="Soderlund C."/>
            <person name="Nelson W."/>
            <person name="de la Bastide M."/>
            <person name="Spiegel L."/>
            <person name="Nascimento L."/>
            <person name="Huang E."/>
            <person name="Preston R."/>
            <person name="Zutavern T."/>
            <person name="Palmer L."/>
            <person name="O'Shaughnessy A."/>
            <person name="Dike S."/>
            <person name="McCombie W.R."/>
            <person name="Minx P."/>
            <person name="Cordum H."/>
            <person name="Wilson R."/>
            <person name="Jin W."/>
            <person name="Lee H.R."/>
            <person name="Jiang J."/>
            <person name="Jackson S."/>
        </authorList>
    </citation>
    <scope>NUCLEOTIDE SEQUENCE [LARGE SCALE GENOMIC DNA]</scope>
    <source>
        <strain>cv. Nipponbare</strain>
    </source>
</reference>
<reference key="3">
    <citation type="journal article" date="2005" name="Nature">
        <title>The map-based sequence of the rice genome.</title>
        <authorList>
            <consortium name="International rice genome sequencing project (IRGSP)"/>
        </authorList>
    </citation>
    <scope>NUCLEOTIDE SEQUENCE [LARGE SCALE GENOMIC DNA]</scope>
    <source>
        <strain>cv. Nipponbare</strain>
    </source>
</reference>
<reference key="4">
    <citation type="journal article" date="2008" name="Nucleic Acids Res.">
        <title>The rice annotation project database (RAP-DB): 2008 update.</title>
        <authorList>
            <consortium name="The rice annotation project (RAP)"/>
        </authorList>
    </citation>
    <scope>GENOME REANNOTATION</scope>
    <source>
        <strain>cv. Nipponbare</strain>
    </source>
</reference>
<reference key="5">
    <citation type="journal article" date="2013" name="Rice">
        <title>Improvement of the Oryza sativa Nipponbare reference genome using next generation sequence and optical map data.</title>
        <authorList>
            <person name="Kawahara Y."/>
            <person name="de la Bastide M."/>
            <person name="Hamilton J.P."/>
            <person name="Kanamori H."/>
            <person name="McCombie W.R."/>
            <person name="Ouyang S."/>
            <person name="Schwartz D.C."/>
            <person name="Tanaka T."/>
            <person name="Wu J."/>
            <person name="Zhou S."/>
            <person name="Childs K.L."/>
            <person name="Davidson R.M."/>
            <person name="Lin H."/>
            <person name="Quesada-Ocampo L."/>
            <person name="Vaillancourt B."/>
            <person name="Sakai H."/>
            <person name="Lee S.S."/>
            <person name="Kim J."/>
            <person name="Numa H."/>
            <person name="Itoh T."/>
            <person name="Buell C.R."/>
            <person name="Matsumoto T."/>
        </authorList>
    </citation>
    <scope>GENOME REANNOTATION</scope>
    <source>
        <strain>cv. Nipponbare</strain>
    </source>
</reference>
<reference key="6">
    <citation type="journal article" date="2005" name="PLoS Biol.">
        <title>The genomes of Oryza sativa: a history of duplications.</title>
        <authorList>
            <person name="Yu J."/>
            <person name="Wang J."/>
            <person name="Lin W."/>
            <person name="Li S."/>
            <person name="Li H."/>
            <person name="Zhou J."/>
            <person name="Ni P."/>
            <person name="Dong W."/>
            <person name="Hu S."/>
            <person name="Zeng C."/>
            <person name="Zhang J."/>
            <person name="Zhang Y."/>
            <person name="Li R."/>
            <person name="Xu Z."/>
            <person name="Li S."/>
            <person name="Li X."/>
            <person name="Zheng H."/>
            <person name="Cong L."/>
            <person name="Lin L."/>
            <person name="Yin J."/>
            <person name="Geng J."/>
            <person name="Li G."/>
            <person name="Shi J."/>
            <person name="Liu J."/>
            <person name="Lv H."/>
            <person name="Li J."/>
            <person name="Wang J."/>
            <person name="Deng Y."/>
            <person name="Ran L."/>
            <person name="Shi X."/>
            <person name="Wang X."/>
            <person name="Wu Q."/>
            <person name="Li C."/>
            <person name="Ren X."/>
            <person name="Wang J."/>
            <person name="Wang X."/>
            <person name="Li D."/>
            <person name="Liu D."/>
            <person name="Zhang X."/>
            <person name="Ji Z."/>
            <person name="Zhao W."/>
            <person name="Sun Y."/>
            <person name="Zhang Z."/>
            <person name="Bao J."/>
            <person name="Han Y."/>
            <person name="Dong L."/>
            <person name="Ji J."/>
            <person name="Chen P."/>
            <person name="Wu S."/>
            <person name="Liu J."/>
            <person name="Xiao Y."/>
            <person name="Bu D."/>
            <person name="Tan J."/>
            <person name="Yang L."/>
            <person name="Ye C."/>
            <person name="Zhang J."/>
            <person name="Xu J."/>
            <person name="Zhou Y."/>
            <person name="Yu Y."/>
            <person name="Zhang B."/>
            <person name="Zhuang S."/>
            <person name="Wei H."/>
            <person name="Liu B."/>
            <person name="Lei M."/>
            <person name="Yu H."/>
            <person name="Li Y."/>
            <person name="Xu H."/>
            <person name="Wei S."/>
            <person name="He X."/>
            <person name="Fang L."/>
            <person name="Zhang Z."/>
            <person name="Zhang Y."/>
            <person name="Huang X."/>
            <person name="Su Z."/>
            <person name="Tong W."/>
            <person name="Li J."/>
            <person name="Tong Z."/>
            <person name="Li S."/>
            <person name="Ye J."/>
            <person name="Wang L."/>
            <person name="Fang L."/>
            <person name="Lei T."/>
            <person name="Chen C.-S."/>
            <person name="Chen H.-C."/>
            <person name="Xu Z."/>
            <person name="Li H."/>
            <person name="Huang H."/>
            <person name="Zhang F."/>
            <person name="Xu H."/>
            <person name="Li N."/>
            <person name="Zhao C."/>
            <person name="Li S."/>
            <person name="Dong L."/>
            <person name="Huang Y."/>
            <person name="Li L."/>
            <person name="Xi Y."/>
            <person name="Qi Q."/>
            <person name="Li W."/>
            <person name="Zhang B."/>
            <person name="Hu W."/>
            <person name="Zhang Y."/>
            <person name="Tian X."/>
            <person name="Jiao Y."/>
            <person name="Liang X."/>
            <person name="Jin J."/>
            <person name="Gao L."/>
            <person name="Zheng W."/>
            <person name="Hao B."/>
            <person name="Liu S.-M."/>
            <person name="Wang W."/>
            <person name="Yuan L."/>
            <person name="Cao M."/>
            <person name="McDermott J."/>
            <person name="Samudrala R."/>
            <person name="Wang J."/>
            <person name="Wong G.K.-S."/>
            <person name="Yang H."/>
        </authorList>
    </citation>
    <scope>NUCLEOTIDE SEQUENCE [LARGE SCALE GENOMIC DNA]</scope>
    <source>
        <strain>cv. Nipponbare</strain>
    </source>
</reference>
<reference key="7">
    <citation type="journal article" date="2003" name="Science">
        <title>Collection, mapping, and annotation of over 28,000 cDNA clones from japonica rice.</title>
        <authorList>
            <consortium name="The rice full-length cDNA consortium"/>
        </authorList>
    </citation>
    <scope>NUCLEOTIDE SEQUENCE [LARGE SCALE MRNA]</scope>
    <source>
        <strain>cv. Nipponbare</strain>
    </source>
</reference>
<reference key="8">
    <citation type="journal article" date="2006" name="Plant Physiol.">
        <title>Whole-genome analysis of Oryza sativa reveals similar architecture of two-component signaling machinery with Arabidopsis.</title>
        <authorList>
            <person name="Pareek A."/>
            <person name="Singh A."/>
            <person name="Kumar M."/>
            <person name="Kushwaha H.R."/>
            <person name="Lynn A.M."/>
            <person name="Singla-Pareek S.L."/>
        </authorList>
    </citation>
    <scope>DISRUPTION PHENOTYPE</scope>
</reference>
<reference key="9">
    <citation type="journal article" date="2007" name="Plant Physiol.">
        <title>Nomenclature for two-component signaling elements of rice.</title>
        <authorList>
            <person name="Schaller G.E."/>
            <person name="Doi K."/>
            <person name="Hwang I."/>
            <person name="Kieber J.J."/>
            <person name="Khurana J.P."/>
            <person name="Kurata N."/>
            <person name="Mizuno T."/>
            <person name="Pareek A."/>
            <person name="Shiu S.H."/>
            <person name="Wu P."/>
            <person name="Yip W.K."/>
        </authorList>
    </citation>
    <scope>GENE FAMILY</scope>
    <scope>NOMENCLATURE</scope>
</reference>
<dbReference type="EMBL" id="BR000250">
    <property type="protein sequence ID" value="FAA00254.1"/>
    <property type="molecule type" value="Genomic_DNA"/>
</dbReference>
<dbReference type="EMBL" id="AB246780">
    <property type="protein sequence ID" value="BAE97711.1"/>
    <property type="molecule type" value="mRNA"/>
</dbReference>
<dbReference type="EMBL" id="AC107226">
    <property type="protein sequence ID" value="AAN52739.1"/>
    <property type="molecule type" value="Genomic_DNA"/>
</dbReference>
<dbReference type="EMBL" id="DP000009">
    <property type="protein sequence ID" value="ABF94725.1"/>
    <property type="molecule type" value="Genomic_DNA"/>
</dbReference>
<dbReference type="EMBL" id="DP000009">
    <property type="protein sequence ID" value="ABF94726.1"/>
    <property type="molecule type" value="Genomic_DNA"/>
</dbReference>
<dbReference type="EMBL" id="DP000009">
    <property type="protein sequence ID" value="ABF94727.1"/>
    <property type="molecule type" value="Genomic_DNA"/>
</dbReference>
<dbReference type="EMBL" id="AP008209">
    <property type="protein sequence ID" value="BAF11341.1"/>
    <property type="molecule type" value="Genomic_DNA"/>
</dbReference>
<dbReference type="EMBL" id="AP014959">
    <property type="protein sequence ID" value="BAS83042.1"/>
    <property type="molecule type" value="Genomic_DNA"/>
</dbReference>
<dbReference type="EMBL" id="CM000140">
    <property type="protein sequence ID" value="EAZ26116.1"/>
    <property type="molecule type" value="Genomic_DNA"/>
</dbReference>
<dbReference type="EMBL" id="AK111864">
    <property type="protein sequence ID" value="BAG99452.1"/>
    <property type="molecule type" value="mRNA"/>
</dbReference>
<dbReference type="EMBL" id="AK111899">
    <property type="protein sequence ID" value="BAG99468.1"/>
    <property type="molecule type" value="mRNA"/>
</dbReference>
<dbReference type="RefSeq" id="XP_015630577.1">
    <property type="nucleotide sequence ID" value="XM_015775091.1"/>
</dbReference>
<dbReference type="RefSeq" id="XP_015630578.1">
    <property type="nucleotide sequence ID" value="XM_015775092.1"/>
</dbReference>
<dbReference type="SMR" id="Q8H7S7"/>
<dbReference type="FunCoup" id="Q8H7S7">
    <property type="interactions" value="1946"/>
</dbReference>
<dbReference type="STRING" id="39947.Q8H7S7"/>
<dbReference type="PaxDb" id="39947-Q8H7S7"/>
<dbReference type="EnsemblPlants" id="Os03t0224200-01">
    <property type="protein sequence ID" value="Os03t0224200-01"/>
    <property type="gene ID" value="Os03g0224200"/>
</dbReference>
<dbReference type="EnsemblPlants" id="Os03t0224200-02">
    <property type="protein sequence ID" value="Os03t0224200-02"/>
    <property type="gene ID" value="Os03g0224200"/>
</dbReference>
<dbReference type="Gramene" id="Os03t0224200-01">
    <property type="protein sequence ID" value="Os03t0224200-01"/>
    <property type="gene ID" value="Os03g0224200"/>
</dbReference>
<dbReference type="Gramene" id="Os03t0224200-02">
    <property type="protein sequence ID" value="Os03t0224200-02"/>
    <property type="gene ID" value="Os03g0224200"/>
</dbReference>
<dbReference type="KEGG" id="dosa:Os03g0224200"/>
<dbReference type="eggNOG" id="KOG1601">
    <property type="taxonomic scope" value="Eukaryota"/>
</dbReference>
<dbReference type="HOGENOM" id="CLU_024359_1_1_1"/>
<dbReference type="InParanoid" id="Q8H7S7"/>
<dbReference type="OMA" id="IGQATTC"/>
<dbReference type="OrthoDB" id="60033at2759"/>
<dbReference type="Proteomes" id="UP000000763">
    <property type="component" value="Chromosome 3"/>
</dbReference>
<dbReference type="Proteomes" id="UP000007752">
    <property type="component" value="Chromosome 3"/>
</dbReference>
<dbReference type="Proteomes" id="UP000059680">
    <property type="component" value="Chromosome 3"/>
</dbReference>
<dbReference type="ExpressionAtlas" id="Q8H7S7">
    <property type="expression patterns" value="baseline and differential"/>
</dbReference>
<dbReference type="GO" id="GO:0005634">
    <property type="term" value="C:nucleus"/>
    <property type="evidence" value="ECO:0007669"/>
    <property type="project" value="UniProtKB-SubCell"/>
</dbReference>
<dbReference type="GO" id="GO:0003677">
    <property type="term" value="F:DNA binding"/>
    <property type="evidence" value="ECO:0007669"/>
    <property type="project" value="UniProtKB-KW"/>
</dbReference>
<dbReference type="GO" id="GO:0003700">
    <property type="term" value="F:DNA-binding transcription factor activity"/>
    <property type="evidence" value="ECO:0007669"/>
    <property type="project" value="InterPro"/>
</dbReference>
<dbReference type="GO" id="GO:0009736">
    <property type="term" value="P:cytokinin-activated signaling pathway"/>
    <property type="evidence" value="ECO:0007669"/>
    <property type="project" value="UniProtKB-KW"/>
</dbReference>
<dbReference type="GO" id="GO:0000160">
    <property type="term" value="P:phosphorelay signal transduction system"/>
    <property type="evidence" value="ECO:0007669"/>
    <property type="project" value="UniProtKB-KW"/>
</dbReference>
<dbReference type="CDD" id="cd17584">
    <property type="entry name" value="REC_typeB_ARR-like"/>
    <property type="match status" value="1"/>
</dbReference>
<dbReference type="FunFam" id="1.10.10.60:FF:000007">
    <property type="entry name" value="Two-component response regulator"/>
    <property type="match status" value="1"/>
</dbReference>
<dbReference type="FunFam" id="3.40.50.2300:FF:000132">
    <property type="entry name" value="Two-component response regulator"/>
    <property type="match status" value="1"/>
</dbReference>
<dbReference type="Gene3D" id="3.40.50.2300">
    <property type="match status" value="1"/>
</dbReference>
<dbReference type="Gene3D" id="1.10.10.60">
    <property type="entry name" value="Homeodomain-like"/>
    <property type="match status" value="1"/>
</dbReference>
<dbReference type="InterPro" id="IPR045279">
    <property type="entry name" value="ARR-like"/>
</dbReference>
<dbReference type="InterPro" id="IPR011006">
    <property type="entry name" value="CheY-like_superfamily"/>
</dbReference>
<dbReference type="InterPro" id="IPR009057">
    <property type="entry name" value="Homeodomain-like_sf"/>
</dbReference>
<dbReference type="InterPro" id="IPR017930">
    <property type="entry name" value="Myb_dom"/>
</dbReference>
<dbReference type="InterPro" id="IPR006447">
    <property type="entry name" value="Myb_dom_plants"/>
</dbReference>
<dbReference type="InterPro" id="IPR017053">
    <property type="entry name" value="Response_reg_B-typ_pln"/>
</dbReference>
<dbReference type="InterPro" id="IPR001005">
    <property type="entry name" value="SANT/Myb"/>
</dbReference>
<dbReference type="InterPro" id="IPR001789">
    <property type="entry name" value="Sig_transdc_resp-reg_receiver"/>
</dbReference>
<dbReference type="NCBIfam" id="TIGR01557">
    <property type="entry name" value="myb_SHAQKYF"/>
    <property type="match status" value="1"/>
</dbReference>
<dbReference type="PANTHER" id="PTHR43874">
    <property type="entry name" value="TWO-COMPONENT RESPONSE REGULATOR"/>
    <property type="match status" value="1"/>
</dbReference>
<dbReference type="PANTHER" id="PTHR43874:SF67">
    <property type="entry name" value="TWO-COMPONENT RESPONSE REGULATOR ARR2"/>
    <property type="match status" value="1"/>
</dbReference>
<dbReference type="Pfam" id="PF00249">
    <property type="entry name" value="Myb_DNA-binding"/>
    <property type="match status" value="1"/>
</dbReference>
<dbReference type="Pfam" id="PF00072">
    <property type="entry name" value="Response_reg"/>
    <property type="match status" value="1"/>
</dbReference>
<dbReference type="PIRSF" id="PIRSF036392">
    <property type="entry name" value="RR_ARR_type-B"/>
    <property type="match status" value="1"/>
</dbReference>
<dbReference type="SMART" id="SM00448">
    <property type="entry name" value="REC"/>
    <property type="match status" value="1"/>
</dbReference>
<dbReference type="SUPFAM" id="SSF52172">
    <property type="entry name" value="CheY-like"/>
    <property type="match status" value="1"/>
</dbReference>
<dbReference type="SUPFAM" id="SSF46689">
    <property type="entry name" value="Homeodomain-like"/>
    <property type="match status" value="1"/>
</dbReference>
<dbReference type="PROSITE" id="PS51294">
    <property type="entry name" value="HTH_MYB"/>
    <property type="match status" value="1"/>
</dbReference>
<dbReference type="PROSITE" id="PS50110">
    <property type="entry name" value="RESPONSE_REGULATORY"/>
    <property type="match status" value="1"/>
</dbReference>
<sequence length="691" mass="73807">MAPVEDGGGVEFPVGMKVLVVDDDPTCLAVLKRMLLECRYDATTCSQATRALTMLRENRRGFDVIISDVHMPDMDGFRLLELVGLEMDLPVIMMSADSRTDIVMKGIKHGACDYLIKPVRMEELKNIWQHVIRKKFNENKEHEHSGSLDDTDRTRPTNNDNEYASSANDGAEGSWKSQKKKRDKDDDDGELESGDPSSTSKKPRVVWSVELHQQFVNAVNHLGIDKAVPKKILELMNVPGLTRENVASHLQKFRLYLKRIAQHHAGIANPFCPPASSGKVGSLGGLDFQALAASGQIPPQALAALQDELLGRPTNSLVLPGRDQSSLRLAAVKGNKPHGEREIAFGQPIYKCQNNAYGAFPQSSPAVGGMPSFSAWPNNKLGMADSTGTLGGMSNSQNSNIVLHELQQQPDAMLSGTLHSLDVKPSGIVMPSQSLNTFSASEGLSPNQNTLMIPAQSSGFLAAMPPSMKHEPVLATSQPSSSLLGGIDLVNQASTSQPLISAHGGGNLSGLVNRNPNVVPSQGISTFHTPNNPYLVSPNSMGMGSKQPPGVLKTENSDALNHSYGYLGGSNPPMDSGLLSSQSKNTQFGLLGQDDITGSWSPLPNVDSYGNTVGLSHPGSSSSSFQSSNVALGKLPDQGRGKNHGFVGKGTCIPSRFAVDEIESPTNNLSHSIGSSGDIMSPDIFGFSGQM</sequence>
<organism>
    <name type="scientific">Oryza sativa subsp. japonica</name>
    <name type="common">Rice</name>
    <dbReference type="NCBI Taxonomy" id="39947"/>
    <lineage>
        <taxon>Eukaryota</taxon>
        <taxon>Viridiplantae</taxon>
        <taxon>Streptophyta</taxon>
        <taxon>Embryophyta</taxon>
        <taxon>Tracheophyta</taxon>
        <taxon>Spermatophyta</taxon>
        <taxon>Magnoliopsida</taxon>
        <taxon>Liliopsida</taxon>
        <taxon>Poales</taxon>
        <taxon>Poaceae</taxon>
        <taxon>BOP clade</taxon>
        <taxon>Oryzoideae</taxon>
        <taxon>Oryzeae</taxon>
        <taxon>Oryzinae</taxon>
        <taxon>Oryza</taxon>
        <taxon>Oryza sativa</taxon>
    </lineage>
</organism>
<protein>
    <recommendedName>
        <fullName evidence="9">Two-component response regulator ORR21</fullName>
    </recommendedName>
    <alternativeName>
        <fullName evidence="6">OsRRB1</fullName>
    </alternativeName>
</protein>
<keyword id="KW-0010">Activator</keyword>
<keyword id="KW-0932">Cytokinin signaling pathway</keyword>
<keyword id="KW-0238">DNA-binding</keyword>
<keyword id="KW-0539">Nucleus</keyword>
<keyword id="KW-0597">Phosphoprotein</keyword>
<keyword id="KW-1185">Reference proteome</keyword>
<keyword id="KW-0804">Transcription</keyword>
<keyword id="KW-0805">Transcription regulation</keyword>
<keyword id="KW-0902">Two-component regulatory system</keyword>
<proteinExistence type="evidence at transcript level"/>
<gene>
    <name evidence="8" type="primary">RR21</name>
    <name evidence="7" type="synonym">ORR1</name>
    <name evidence="12" type="ordered locus">Os03g0224200</name>
    <name evidence="11" type="ordered locus">LOC_Os03g12350</name>
    <name evidence="13" type="ORF">OsJ_09978</name>
    <name evidence="10" type="ORF">OSJNBa0081P02.4</name>
</gene>
<evidence type="ECO:0000250" key="1">
    <source>
        <dbReference type="UniProtKB" id="Q940D0"/>
    </source>
</evidence>
<evidence type="ECO:0000255" key="2">
    <source>
        <dbReference type="PROSITE-ProRule" id="PRU00169"/>
    </source>
</evidence>
<evidence type="ECO:0000255" key="3">
    <source>
        <dbReference type="PROSITE-ProRule" id="PRU00625"/>
    </source>
</evidence>
<evidence type="ECO:0000256" key="4">
    <source>
        <dbReference type="SAM" id="MobiDB-lite"/>
    </source>
</evidence>
<evidence type="ECO:0000269" key="5">
    <source>
    </source>
</evidence>
<evidence type="ECO:0000303" key="6">
    <source>
    </source>
</evidence>
<evidence type="ECO:0000303" key="7">
    <source>
    </source>
</evidence>
<evidence type="ECO:0000303" key="8">
    <source>
    </source>
</evidence>
<evidence type="ECO:0000305" key="9"/>
<evidence type="ECO:0000312" key="10">
    <source>
        <dbReference type="EMBL" id="AAN52739.1"/>
    </source>
</evidence>
<evidence type="ECO:0000312" key="11">
    <source>
        <dbReference type="EMBL" id="ABF94725.1"/>
    </source>
</evidence>
<evidence type="ECO:0000312" key="12">
    <source>
        <dbReference type="EMBL" id="BAF11341.1"/>
    </source>
</evidence>
<evidence type="ECO:0000312" key="13">
    <source>
        <dbReference type="EMBL" id="EAZ26116.1"/>
    </source>
</evidence>
<feature type="chain" id="PRO_0000433840" description="Two-component response regulator ORR21">
    <location>
        <begin position="1"/>
        <end position="691"/>
    </location>
</feature>
<feature type="domain" description="Response regulatory" evidence="2">
    <location>
        <begin position="17"/>
        <end position="132"/>
    </location>
</feature>
<feature type="DNA-binding region" description="Myb-like GARP" evidence="3">
    <location>
        <begin position="199"/>
        <end position="258"/>
    </location>
</feature>
<feature type="region of interest" description="Disordered" evidence="4">
    <location>
        <begin position="139"/>
        <end position="204"/>
    </location>
</feature>
<feature type="compositionally biased region" description="Basic and acidic residues" evidence="4">
    <location>
        <begin position="139"/>
        <end position="155"/>
    </location>
</feature>
<feature type="modified residue" description="4-aspartylphosphate" evidence="2">
    <location>
        <position position="68"/>
    </location>
</feature>
<comment type="function">
    <text evidence="1">Transcriptional activator that binds specific DNA sequence. Functions as a response regulator involved in His-to-Asp phosphorelay signal transduction system. Phosphorylation of the Asp residue in the receiver domain activates the ability of the protein to promote the transcription of target genes. May directly activate some type-A response regulators in response to cytokinins.</text>
</comment>
<comment type="subcellular location">
    <subcellularLocation>
        <location evidence="3">Nucleus</location>
    </subcellularLocation>
</comment>
<comment type="PTM">
    <text evidence="9">Two-component system major event consists of a His-to-Asp phosphorelay between a sensor histidine kinase (HK) and a response regulator (RR). In plants, the His-to-Asp phosphorelay involves an additional intermediate named Histidine-containing phosphotransfer protein (HPt). This multistep phosphorelay consists of a His-Asp-His-Asp sequential transfer of a phosphate group between first a His and an Asp of the HK protein, followed by the transfer to a conserved His of the HPt protein and finally the transfer to an Asp in the receiver domain of the RR protein.</text>
</comment>
<comment type="disruption phenotype">
    <text evidence="5">Dwarf, narrow leaf, lesion mimic, low tillering and late heading phenotypes.</text>
</comment>
<comment type="similarity">
    <text evidence="9">Belongs to the ARR family. Type-B subfamily.</text>
</comment>